<keyword id="KW-0002">3D-structure</keyword>
<keyword id="KW-0007">Acetylation</keyword>
<keyword id="KW-0013">ADP-ribosylation</keyword>
<keyword id="KW-0025">Alternative splicing</keyword>
<keyword id="KW-0158">Chromosome</keyword>
<keyword id="KW-0164">Citrullination</keyword>
<keyword id="KW-0903">Direct protein sequencing</keyword>
<keyword id="KW-0238">DNA-binding</keyword>
<keyword id="KW-0539">Nucleus</keyword>
<keyword id="KW-0597">Phosphoprotein</keyword>
<keyword id="KW-1267">Proteomics identification</keyword>
<keyword id="KW-1185">Reference proteome</keyword>
<keyword id="KW-0691">RNA editing</keyword>
<gene>
    <name evidence="9" type="primary">H1-0</name>
    <name evidence="9" type="synonym">H1F0</name>
    <name type="synonym">H1FV</name>
</gene>
<dbReference type="EMBL" id="X03473">
    <property type="protein sequence ID" value="CAA27190.1"/>
    <property type="molecule type" value="Genomic_DNA"/>
</dbReference>
<dbReference type="EMBL" id="CR456502">
    <property type="protein sequence ID" value="CAG30388.1"/>
    <property type="molecule type" value="mRNA"/>
</dbReference>
<dbReference type="EMBL" id="CR542220">
    <property type="protein sequence ID" value="CAG47016.1"/>
    <property type="molecule type" value="mRNA"/>
</dbReference>
<dbReference type="EMBL" id="AK299209">
    <property type="protein sequence ID" value="BAG61248.1"/>
    <property type="molecule type" value="mRNA"/>
</dbReference>
<dbReference type="EMBL" id="AK312583">
    <property type="protein sequence ID" value="BAG35477.1"/>
    <property type="molecule type" value="mRNA"/>
</dbReference>
<dbReference type="EMBL" id="Z97630">
    <property type="status" value="NOT_ANNOTATED_CDS"/>
    <property type="molecule type" value="Genomic_DNA"/>
</dbReference>
<dbReference type="EMBL" id="CH471095">
    <property type="protein sequence ID" value="EAW60188.1"/>
    <property type="molecule type" value="Genomic_DNA"/>
</dbReference>
<dbReference type="EMBL" id="BC000145">
    <property type="protein sequence ID" value="AAH00145.1"/>
    <property type="molecule type" value="mRNA"/>
</dbReference>
<dbReference type="EMBL" id="BC029046">
    <property type="protein sequence ID" value="AAH29046.1"/>
    <property type="molecule type" value="mRNA"/>
</dbReference>
<dbReference type="CCDS" id="CCDS13956.1">
    <molecule id="P07305-1"/>
</dbReference>
<dbReference type="PIR" id="A24850">
    <property type="entry name" value="HSHU10"/>
</dbReference>
<dbReference type="RefSeq" id="NP_005309.1">
    <molecule id="P07305-1"/>
    <property type="nucleotide sequence ID" value="NM_005318.4"/>
</dbReference>
<dbReference type="PDB" id="6HQ1">
    <property type="method" value="NMR"/>
    <property type="chains" value="A=24-97"/>
</dbReference>
<dbReference type="PDB" id="6LA2">
    <property type="method" value="X-ray"/>
    <property type="resolution" value="3.89 A"/>
    <property type="chains" value="S/T=1-194"/>
</dbReference>
<dbReference type="PDB" id="6LA8">
    <property type="method" value="X-ray"/>
    <property type="resolution" value="3.40 A"/>
    <property type="chains" value="S=1-194"/>
</dbReference>
<dbReference type="PDB" id="6LA9">
    <property type="method" value="X-ray"/>
    <property type="resolution" value="3.70 A"/>
    <property type="chains" value="S/T=1-194"/>
</dbReference>
<dbReference type="PDB" id="6LAB">
    <property type="method" value="X-ray"/>
    <property type="resolution" value="3.20 A"/>
    <property type="chains" value="U/V=1-194"/>
</dbReference>
<dbReference type="PDB" id="6N88">
    <property type="method" value="EM"/>
    <property type="resolution" value="6.20 A"/>
    <property type="chains" value="C=1-194"/>
</dbReference>
<dbReference type="PDB" id="6N89">
    <property type="method" value="EM"/>
    <property type="resolution" value="7.50 A"/>
    <property type="chains" value="B=1-194"/>
</dbReference>
<dbReference type="PDB" id="7COW">
    <property type="method" value="X-ray"/>
    <property type="resolution" value="2.86 A"/>
    <property type="chains" value="S/T=2-194"/>
</dbReference>
<dbReference type="PDB" id="7DBP">
    <property type="method" value="EM"/>
    <property type="resolution" value="4.50 A"/>
    <property type="chains" value="K=2-194"/>
</dbReference>
<dbReference type="PDB" id="7K5X">
    <property type="method" value="EM"/>
    <property type="resolution" value="2.93 A"/>
    <property type="chains" value="U=1-194"/>
</dbReference>
<dbReference type="PDB" id="7XVL">
    <property type="method" value="X-ray"/>
    <property type="resolution" value="3.51 A"/>
    <property type="chains" value="o=2-194"/>
</dbReference>
<dbReference type="PDB" id="7XX6">
    <property type="method" value="X-ray"/>
    <property type="resolution" value="3.39 A"/>
    <property type="chains" value="o/p=2-194"/>
</dbReference>
<dbReference type="PDB" id="8TB9">
    <property type="method" value="EM"/>
    <property type="resolution" value="4.00 A"/>
    <property type="chains" value="A=1-194"/>
</dbReference>
<dbReference type="PDB" id="9IPU">
    <property type="method" value="EM"/>
    <property type="resolution" value="4.30 A"/>
    <property type="chains" value="I=1-194"/>
</dbReference>
<dbReference type="PDBsum" id="6HQ1"/>
<dbReference type="PDBsum" id="6LA2"/>
<dbReference type="PDBsum" id="6LA8"/>
<dbReference type="PDBsum" id="6LA9"/>
<dbReference type="PDBsum" id="6LAB"/>
<dbReference type="PDBsum" id="6N88"/>
<dbReference type="PDBsum" id="6N89"/>
<dbReference type="PDBsum" id="7COW"/>
<dbReference type="PDBsum" id="7DBP"/>
<dbReference type="PDBsum" id="7K5X"/>
<dbReference type="PDBsum" id="7XVL"/>
<dbReference type="PDBsum" id="7XX6"/>
<dbReference type="PDBsum" id="8TB9"/>
<dbReference type="PDBsum" id="9IPU"/>
<dbReference type="EMDB" id="EMD-0366"/>
<dbReference type="EMDB" id="EMD-0367"/>
<dbReference type="EMDB" id="EMD-22683"/>
<dbReference type="EMDB" id="EMD-41146"/>
<dbReference type="EMDB" id="EMD-60781"/>
<dbReference type="SMR" id="P07305"/>
<dbReference type="BioGRID" id="109260">
    <property type="interactions" value="260"/>
</dbReference>
<dbReference type="DIP" id="DIP-41775N"/>
<dbReference type="ELM" id="P07305"/>
<dbReference type="FunCoup" id="P07305">
    <property type="interactions" value="829"/>
</dbReference>
<dbReference type="IntAct" id="P07305">
    <property type="interactions" value="154"/>
</dbReference>
<dbReference type="MINT" id="P07305"/>
<dbReference type="STRING" id="9606.ENSP00000344504"/>
<dbReference type="BindingDB" id="P07305"/>
<dbReference type="DrugCentral" id="P07305"/>
<dbReference type="GlyGen" id="P07305">
    <property type="glycosylation" value="1 site, 1 O-linked glycan (1 site)"/>
</dbReference>
<dbReference type="iPTMnet" id="P07305"/>
<dbReference type="PhosphoSitePlus" id="P07305"/>
<dbReference type="SwissPalm" id="P07305"/>
<dbReference type="BioMuta" id="H1F0"/>
<dbReference type="DMDM" id="121897"/>
<dbReference type="jPOST" id="P07305"/>
<dbReference type="MassIVE" id="P07305"/>
<dbReference type="PaxDb" id="9606-ENSP00000344504"/>
<dbReference type="PeptideAtlas" id="P07305"/>
<dbReference type="PRIDE" id="P07305"/>
<dbReference type="ProteomicsDB" id="51978">
    <molecule id="P07305-1"/>
</dbReference>
<dbReference type="ProteomicsDB" id="51979">
    <molecule id="P07305-2"/>
</dbReference>
<dbReference type="Pumba" id="P07305"/>
<dbReference type="TopDownProteomics" id="P07305-1">
    <molecule id="P07305-1"/>
</dbReference>
<dbReference type="ABCD" id="P07305">
    <property type="antibodies" value="2 sequenced antibodies"/>
</dbReference>
<dbReference type="Antibodypedia" id="211">
    <property type="antibodies" value="734 antibodies from 34 providers"/>
</dbReference>
<dbReference type="DNASU" id="3005"/>
<dbReference type="Ensembl" id="ENST00000340857.4">
    <molecule id="P07305-1"/>
    <property type="protein sequence ID" value="ENSP00000344504.2"/>
    <property type="gene ID" value="ENSG00000189060.6"/>
</dbReference>
<dbReference type="GeneID" id="3005"/>
<dbReference type="KEGG" id="hsa:3005"/>
<dbReference type="MANE-Select" id="ENST00000340857.4">
    <property type="protein sequence ID" value="ENSP00000344504.2"/>
    <property type="RefSeq nucleotide sequence ID" value="NM_005318.4"/>
    <property type="RefSeq protein sequence ID" value="NP_005309.1"/>
</dbReference>
<dbReference type="UCSC" id="uc003aty.4">
    <molecule id="P07305-1"/>
    <property type="organism name" value="human"/>
</dbReference>
<dbReference type="AGR" id="HGNC:4714"/>
<dbReference type="CTD" id="3005"/>
<dbReference type="DisGeNET" id="3005"/>
<dbReference type="GeneCards" id="H1-0"/>
<dbReference type="HGNC" id="HGNC:4714">
    <property type="gene designation" value="H1-0"/>
</dbReference>
<dbReference type="HPA" id="ENSG00000189060">
    <property type="expression patterns" value="Tissue enhanced (bone)"/>
</dbReference>
<dbReference type="MIM" id="142708">
    <property type="type" value="gene"/>
</dbReference>
<dbReference type="neXtProt" id="NX_P07305"/>
<dbReference type="OpenTargets" id="ENSG00000189060"/>
<dbReference type="PharmGKB" id="PA29092"/>
<dbReference type="VEuPathDB" id="HostDB:ENSG00000189060"/>
<dbReference type="eggNOG" id="KOG4012">
    <property type="taxonomic scope" value="Eukaryota"/>
</dbReference>
<dbReference type="GeneTree" id="ENSGT00810000125570"/>
<dbReference type="HOGENOM" id="CLU_052897_1_1_1"/>
<dbReference type="InParanoid" id="P07305"/>
<dbReference type="OMA" id="IKNHYKV"/>
<dbReference type="OrthoDB" id="1110759at2759"/>
<dbReference type="PAN-GO" id="P07305">
    <property type="GO annotations" value="5 GO annotations based on evolutionary models"/>
</dbReference>
<dbReference type="PhylomeDB" id="P07305"/>
<dbReference type="TreeFam" id="TF313664"/>
<dbReference type="PathwayCommons" id="P07305"/>
<dbReference type="Reactome" id="R-HSA-140342">
    <property type="pathway name" value="Apoptosis induced DNA fragmentation"/>
</dbReference>
<dbReference type="Reactome" id="R-HSA-2559584">
    <property type="pathway name" value="Formation of Senescence-Associated Heterochromatin Foci (SAHF)"/>
</dbReference>
<dbReference type="SignaLink" id="P07305"/>
<dbReference type="BioGRID-ORCS" id="3005">
    <property type="hits" value="4 hits in 1150 CRISPR screens"/>
</dbReference>
<dbReference type="CD-CODE" id="91857CE7">
    <property type="entry name" value="Nucleolus"/>
</dbReference>
<dbReference type="CD-CODE" id="DEE660B4">
    <property type="entry name" value="Stress granule"/>
</dbReference>
<dbReference type="ChiTaRS" id="H1F0">
    <property type="organism name" value="human"/>
</dbReference>
<dbReference type="GenomeRNAi" id="3005"/>
<dbReference type="Pharos" id="P07305">
    <property type="development level" value="Tchem"/>
</dbReference>
<dbReference type="PRO" id="PR:P07305"/>
<dbReference type="Proteomes" id="UP000005640">
    <property type="component" value="Chromosome 22"/>
</dbReference>
<dbReference type="RNAct" id="P07305">
    <property type="molecule type" value="protein"/>
</dbReference>
<dbReference type="Bgee" id="ENSG00000189060">
    <property type="expression patterns" value="Expressed in ventricular zone and 206 other cell types or tissues"/>
</dbReference>
<dbReference type="GO" id="GO:0015629">
    <property type="term" value="C:actin cytoskeleton"/>
    <property type="evidence" value="ECO:0000314"/>
    <property type="project" value="HPA"/>
</dbReference>
<dbReference type="GO" id="GO:0000785">
    <property type="term" value="C:chromatin"/>
    <property type="evidence" value="ECO:0000314"/>
    <property type="project" value="UniProtKB"/>
</dbReference>
<dbReference type="GO" id="GO:0000791">
    <property type="term" value="C:euchromatin"/>
    <property type="evidence" value="ECO:0000314"/>
    <property type="project" value="UniProtKB"/>
</dbReference>
<dbReference type="GO" id="GO:0005794">
    <property type="term" value="C:Golgi apparatus"/>
    <property type="evidence" value="ECO:0000314"/>
    <property type="project" value="HPA"/>
</dbReference>
<dbReference type="GO" id="GO:0016604">
    <property type="term" value="C:nuclear body"/>
    <property type="evidence" value="ECO:0000314"/>
    <property type="project" value="HPA"/>
</dbReference>
<dbReference type="GO" id="GO:0005654">
    <property type="term" value="C:nucleoplasm"/>
    <property type="evidence" value="ECO:0000314"/>
    <property type="project" value="HPA"/>
</dbReference>
<dbReference type="GO" id="GO:0000786">
    <property type="term" value="C:nucleosome"/>
    <property type="evidence" value="ECO:0007669"/>
    <property type="project" value="InterPro"/>
</dbReference>
<dbReference type="GO" id="GO:0005634">
    <property type="term" value="C:nucleus"/>
    <property type="evidence" value="ECO:0000314"/>
    <property type="project" value="UniProtKB"/>
</dbReference>
<dbReference type="GO" id="GO:0017053">
    <property type="term" value="C:transcription repressor complex"/>
    <property type="evidence" value="ECO:0000314"/>
    <property type="project" value="UniProtKB"/>
</dbReference>
<dbReference type="GO" id="GO:0031490">
    <property type="term" value="F:chromatin DNA binding"/>
    <property type="evidence" value="ECO:0000314"/>
    <property type="project" value="UniProtKB"/>
</dbReference>
<dbReference type="GO" id="GO:0003690">
    <property type="term" value="F:double-stranded DNA binding"/>
    <property type="evidence" value="ECO:0000318"/>
    <property type="project" value="GO_Central"/>
</dbReference>
<dbReference type="GO" id="GO:0003680">
    <property type="term" value="F:minor groove of adenine-thymine-rich DNA binding"/>
    <property type="evidence" value="ECO:0007669"/>
    <property type="project" value="Ensembl"/>
</dbReference>
<dbReference type="GO" id="GO:0031492">
    <property type="term" value="F:nucleosomal DNA binding"/>
    <property type="evidence" value="ECO:0000318"/>
    <property type="project" value="GO_Central"/>
</dbReference>
<dbReference type="GO" id="GO:0031491">
    <property type="term" value="F:nucleosome binding"/>
    <property type="evidence" value="ECO:0000353"/>
    <property type="project" value="DisProt"/>
</dbReference>
<dbReference type="GO" id="GO:0003723">
    <property type="term" value="F:RNA binding"/>
    <property type="evidence" value="ECO:0007005"/>
    <property type="project" value="UniProtKB"/>
</dbReference>
<dbReference type="GO" id="GO:0030527">
    <property type="term" value="F:structural constituent of chromatin"/>
    <property type="evidence" value="ECO:0007669"/>
    <property type="project" value="InterPro"/>
</dbReference>
<dbReference type="GO" id="GO:0030261">
    <property type="term" value="P:chromosome condensation"/>
    <property type="evidence" value="ECO:0000318"/>
    <property type="project" value="GO_Central"/>
</dbReference>
<dbReference type="GO" id="GO:0031507">
    <property type="term" value="P:heterochromatin formation"/>
    <property type="evidence" value="ECO:0000316"/>
    <property type="project" value="UniProtKB"/>
</dbReference>
<dbReference type="GO" id="GO:0045910">
    <property type="term" value="P:negative regulation of DNA recombination"/>
    <property type="evidence" value="ECO:0000318"/>
    <property type="project" value="GO_Central"/>
</dbReference>
<dbReference type="GO" id="GO:0006334">
    <property type="term" value="P:nucleosome assembly"/>
    <property type="evidence" value="ECO:0007669"/>
    <property type="project" value="InterPro"/>
</dbReference>
<dbReference type="GO" id="GO:2000679">
    <property type="term" value="P:positive regulation of transcription regulatory region DNA binding"/>
    <property type="evidence" value="ECO:0000315"/>
    <property type="project" value="UniProtKB"/>
</dbReference>
<dbReference type="CDD" id="cd00073">
    <property type="entry name" value="H15"/>
    <property type="match status" value="1"/>
</dbReference>
<dbReference type="DisProt" id="DP01156"/>
<dbReference type="FunFam" id="1.10.10.10:FF:000140">
    <property type="entry name" value="Histone H1.0"/>
    <property type="match status" value="1"/>
</dbReference>
<dbReference type="Gene3D" id="1.10.10.10">
    <property type="entry name" value="Winged helix-like DNA-binding domain superfamily/Winged helix DNA-binding domain"/>
    <property type="match status" value="1"/>
</dbReference>
<dbReference type="InterPro" id="IPR005819">
    <property type="entry name" value="H1/H5"/>
</dbReference>
<dbReference type="InterPro" id="IPR005818">
    <property type="entry name" value="Histone_H1/H5_H15"/>
</dbReference>
<dbReference type="InterPro" id="IPR036388">
    <property type="entry name" value="WH-like_DNA-bd_sf"/>
</dbReference>
<dbReference type="InterPro" id="IPR036390">
    <property type="entry name" value="WH_DNA-bd_sf"/>
</dbReference>
<dbReference type="PANTHER" id="PTHR11467">
    <property type="entry name" value="HISTONE H1"/>
    <property type="match status" value="1"/>
</dbReference>
<dbReference type="PANTHER" id="PTHR11467:SF182">
    <property type="entry name" value="HISTONE H1.0"/>
    <property type="match status" value="1"/>
</dbReference>
<dbReference type="Pfam" id="PF00538">
    <property type="entry name" value="Linker_histone"/>
    <property type="match status" value="1"/>
</dbReference>
<dbReference type="PRINTS" id="PR00624">
    <property type="entry name" value="HISTONEH5"/>
</dbReference>
<dbReference type="SMART" id="SM00526">
    <property type="entry name" value="H15"/>
    <property type="match status" value="1"/>
</dbReference>
<dbReference type="SUPFAM" id="SSF46785">
    <property type="entry name" value="Winged helix' DNA-binding domain"/>
    <property type="match status" value="1"/>
</dbReference>
<dbReference type="PROSITE" id="PS51504">
    <property type="entry name" value="H15"/>
    <property type="match status" value="1"/>
</dbReference>
<sequence length="194" mass="20863">MTENSTSAPAAKPKRAKASKKSTDHPKYSDMIVAAIQAEKNRAGSSRQSIQKYIKSHYKVGENADSQIKLSIKRLVTTGVLKQTKGVGASGSFRLAKSDEPKKSVAFKKTKKEIKKVATPKKASKPKKAASKAPTKKPKATPVKKAKKKLAATPKKAKKPKTVKAKPVKASKPKKAKPVKPKAKSSAKRAGKKK</sequence>
<name>H10_HUMAN</name>
<feature type="chain" id="PRO_0000423207" description="Histone H1.0">
    <location>
        <begin position="1"/>
        <end position="194"/>
    </location>
</feature>
<feature type="initiator methionine" description="Removed; alternate" evidence="6 10">
    <location>
        <position position="1"/>
    </location>
</feature>
<feature type="chain" id="PRO_0000195904" description="Histone H1.0, N-terminally processed">
    <location>
        <begin position="2"/>
        <end position="194"/>
    </location>
</feature>
<feature type="domain" description="H15" evidence="2">
    <location>
        <begin position="24"/>
        <end position="97"/>
    </location>
</feature>
<feature type="region of interest" description="Disordered" evidence="3">
    <location>
        <begin position="1"/>
        <end position="29"/>
    </location>
</feature>
<feature type="region of interest" description="Disordered" evidence="3">
    <location>
        <begin position="84"/>
        <end position="194"/>
    </location>
</feature>
<feature type="compositionally biased region" description="Low complexity" evidence="3">
    <location>
        <begin position="1"/>
        <end position="11"/>
    </location>
</feature>
<feature type="compositionally biased region" description="Basic residues" evidence="3">
    <location>
        <begin position="105"/>
        <end position="194"/>
    </location>
</feature>
<feature type="modified residue" description="N-acetylmethionine" evidence="10">
    <location>
        <position position="1"/>
    </location>
</feature>
<feature type="modified residue" description="N-acetylthreonine; partial; in Histone H1.0, N-terminally processed" evidence="6 10">
    <location>
        <position position="2"/>
    </location>
</feature>
<feature type="modified residue" description="Deamidated asparagine; partial" evidence="6">
    <location>
        <position position="4"/>
    </location>
</feature>
<feature type="modified residue" description="Citrulline" evidence="1">
    <location>
        <position position="42"/>
    </location>
</feature>
<feature type="modified residue" description="ADP-ribosylserine" evidence="5">
    <location>
        <position position="104"/>
    </location>
</feature>
<feature type="splice variant" id="VSP_042163" description="In isoform 2." evidence="7">
    <location>
        <begin position="3"/>
        <end position="19"/>
    </location>
</feature>
<feature type="sequence variant" id="VAR_054789" description="In RNA edited version.">
    <original>M</original>
    <variation>MLGKGRQRRRRQRQRQSPVPRPSDRPAGLGLAKPARRALPTPEPGRKSSDSSLASPGAALQTGPVVRGSGADPEAGFAQPPTRAGPLEGAFNSRTRQATM</variation>
    <location>
        <position position="1"/>
    </location>
</feature>
<feature type="sequence conflict" description="In Ref. 7; AAH29046." evidence="8" ref="7">
    <original>D</original>
    <variation>H</variation>
    <location>
        <position position="65"/>
    </location>
</feature>
<feature type="helix" evidence="11">
    <location>
        <begin position="28"/>
        <end position="36"/>
    </location>
</feature>
<feature type="helix" evidence="11">
    <location>
        <begin position="47"/>
        <end position="57"/>
    </location>
</feature>
<feature type="helix" evidence="11">
    <location>
        <begin position="64"/>
        <end position="78"/>
    </location>
</feature>
<feature type="strand" evidence="12">
    <location>
        <begin position="80"/>
        <end position="87"/>
    </location>
</feature>
<feature type="strand" evidence="11">
    <location>
        <begin position="91"/>
        <end position="93"/>
    </location>
</feature>
<evidence type="ECO:0000250" key="1">
    <source>
        <dbReference type="UniProtKB" id="P43275"/>
    </source>
</evidence>
<evidence type="ECO:0000255" key="2">
    <source>
        <dbReference type="PROSITE-ProRule" id="PRU00837"/>
    </source>
</evidence>
<evidence type="ECO:0000256" key="3">
    <source>
        <dbReference type="SAM" id="MobiDB-lite"/>
    </source>
</evidence>
<evidence type="ECO:0000269" key="4">
    <source>
    </source>
</evidence>
<evidence type="ECO:0000269" key="5">
    <source>
    </source>
</evidence>
<evidence type="ECO:0000269" key="6">
    <source>
    </source>
</evidence>
<evidence type="ECO:0000303" key="7">
    <source>
    </source>
</evidence>
<evidence type="ECO:0000305" key="8"/>
<evidence type="ECO:0000312" key="9">
    <source>
        <dbReference type="HGNC" id="HGNC:4714"/>
    </source>
</evidence>
<evidence type="ECO:0007744" key="10">
    <source>
    </source>
</evidence>
<evidence type="ECO:0007829" key="11">
    <source>
        <dbReference type="PDB" id="7COW"/>
    </source>
</evidence>
<evidence type="ECO:0007829" key="12">
    <source>
        <dbReference type="PDB" id="7K5X"/>
    </source>
</evidence>
<protein>
    <recommendedName>
        <fullName>Histone H1.0</fullName>
    </recommendedName>
    <alternativeName>
        <fullName>Histone H1'</fullName>
    </alternativeName>
    <alternativeName>
        <fullName>Histone H1(0)</fullName>
    </alternativeName>
    <component>
        <recommendedName>
            <fullName>Histone H1.0, N-terminally processed</fullName>
        </recommendedName>
    </component>
</protein>
<comment type="function">
    <text>Histones H1 are necessary for the condensation of nucleosome chains into higher-order structures. The histones H1.0 are found in cells that are in terminal stages of differentiation or that have low rates of cell division.</text>
</comment>
<comment type="interaction">
    <interactant intactId="EBI-725224">
        <id>P07305</id>
    </interactant>
    <interactant intactId="EBI-6147676">
        <id>Q99878</id>
        <label>H2AC14</label>
    </interactant>
    <organismsDiffer>false</organismsDiffer>
    <experiments>2</experiments>
</comment>
<comment type="interaction">
    <interactant intactId="EBI-725224">
        <id>P07305</id>
    </interactant>
    <interactant intactId="EBI-1642157">
        <id>Q8IUE6</id>
        <label>H2AC21</label>
    </interactant>
    <organismsDiffer>false</organismsDiffer>
    <experiments>2</experiments>
</comment>
<comment type="interaction">
    <interactant intactId="EBI-725224">
        <id>P07305</id>
    </interactant>
    <interactant intactId="EBI-1056125">
        <id>Q16778</id>
        <label>H2BC21</label>
    </interactant>
    <organismsDiffer>false</organismsDiffer>
    <experiments>3</experiments>
</comment>
<comment type="interaction">
    <interactant intactId="EBI-725224">
        <id>P07305</id>
    </interactant>
    <interactant intactId="EBI-914207">
        <id>Q8IYW5</id>
        <label>RNF168</label>
    </interactant>
    <organismsDiffer>false</organismsDiffer>
    <experiments>2</experiments>
</comment>
<comment type="interaction">
    <interactant intactId="EBI-725224">
        <id>P07305</id>
    </interactant>
    <interactant intactId="EBI-7014446">
        <id>P04014</id>
        <label>E1</label>
    </interactant>
    <organismsDiffer>true</organismsDiffer>
    <experiments>2</experiments>
</comment>
<comment type="subcellular location">
    <subcellularLocation>
        <location evidence="2 4">Nucleus</location>
    </subcellularLocation>
    <subcellularLocation>
        <location evidence="2 4">Chromosome</location>
    </subcellularLocation>
    <text>The RNA edited version has been localized to nuclear speckles. During mitosis, it appears in the vicinity of condensed chromosomes.</text>
</comment>
<comment type="alternative products">
    <event type="alternative splicing"/>
    <isoform>
        <id>P07305-1</id>
        <name>1</name>
        <sequence type="displayed"/>
    </isoform>
    <isoform>
        <id>P07305-2</id>
        <name>2</name>
        <sequence type="described" ref="VSP_042163"/>
    </isoform>
</comment>
<comment type="induction">
    <text evidence="4">Both the unedited and the RNA edited versions are induced by butyrate (at protein level). Only RNA edited version is induced by DTT, vinblastine or TNF (at protein level).</text>
</comment>
<comment type="PTM">
    <text evidence="4">Phosphorylated on Ser-17 in RNA edited version.</text>
</comment>
<comment type="PTM">
    <text evidence="5">ADP-ribosylated on Ser-104 in response to DNA damage.</text>
</comment>
<comment type="RNA editing" locationType="Not_applicable">
    <text evidence="4">Partially edited. In approximately 3.6% of the mRNA molecules, a new initiator methionine is created by a single uridine insertion in the 5'-UTR, causing an N-terminal extension of 99 amino acids. The existence of the RNA edited version is supported by direct protein sequencing by MS/MS of the following peptides specific to that version: 12-21; 22-33; 37-47; 48-67; 68-83; 84-94 and 97-113. The RNA edited version is called ET-H1.0.</text>
</comment>
<comment type="similarity">
    <text evidence="2">Belongs to the histone H1/H5 family.</text>
</comment>
<comment type="online information" name="Wikipedia">
    <link uri="https://en.wikipedia.org/wiki/Histone_H1"/>
    <text>Histone H1 entry</text>
</comment>
<organism>
    <name type="scientific">Homo sapiens</name>
    <name type="common">Human</name>
    <dbReference type="NCBI Taxonomy" id="9606"/>
    <lineage>
        <taxon>Eukaryota</taxon>
        <taxon>Metazoa</taxon>
        <taxon>Chordata</taxon>
        <taxon>Craniata</taxon>
        <taxon>Vertebrata</taxon>
        <taxon>Euteleostomi</taxon>
        <taxon>Mammalia</taxon>
        <taxon>Eutheria</taxon>
        <taxon>Euarchontoglires</taxon>
        <taxon>Primates</taxon>
        <taxon>Haplorrhini</taxon>
        <taxon>Catarrhini</taxon>
        <taxon>Hominidae</taxon>
        <taxon>Homo</taxon>
    </lineage>
</organism>
<proteinExistence type="evidence at protein level"/>
<accession>P07305</accession>
<accession>B2R6I0</accession>
<accession>B4DRD6</accession>
<accession>Q6FG88</accession>
<accession>Q8N6R3</accession>
<reference key="1">
    <citation type="journal article" date="1986" name="J. Mol. Biol.">
        <title>Differential distribution of lysine and arginine residues in the closely related histones H1 and H5. Analysis of a human H1 gene.</title>
        <authorList>
            <person name="Doenecke D."/>
            <person name="Tonjes R."/>
        </authorList>
    </citation>
    <scope>NUCLEOTIDE SEQUENCE [GENOMIC DNA] (ISOFORM 1)</scope>
</reference>
<reference key="2">
    <citation type="journal article" date="2004" name="Genome Biol.">
        <title>A genome annotation-driven approach to cloning the human ORFeome.</title>
        <authorList>
            <person name="Collins J.E."/>
            <person name="Wright C.L."/>
            <person name="Edwards C.A."/>
            <person name="Davis M.P."/>
            <person name="Grinham J.A."/>
            <person name="Cole C.G."/>
            <person name="Goward M.E."/>
            <person name="Aguado B."/>
            <person name="Mallya M."/>
            <person name="Mokrab Y."/>
            <person name="Huckle E.J."/>
            <person name="Beare D.M."/>
            <person name="Dunham I."/>
        </authorList>
    </citation>
    <scope>NUCLEOTIDE SEQUENCE [LARGE SCALE MRNA] (ISOFORM 1)</scope>
</reference>
<reference key="3">
    <citation type="submission" date="2004-06" db="EMBL/GenBank/DDBJ databases">
        <title>Cloning of human full open reading frames in Gateway(TM) system entry vector (pDONR201).</title>
        <authorList>
            <person name="Halleck A."/>
            <person name="Ebert L."/>
            <person name="Mkoundinya M."/>
            <person name="Schick M."/>
            <person name="Eisenstein S."/>
            <person name="Neubert P."/>
            <person name="Kstrang K."/>
            <person name="Schatten R."/>
            <person name="Shen B."/>
            <person name="Henze S."/>
            <person name="Mar W."/>
            <person name="Korn B."/>
            <person name="Zuo D."/>
            <person name="Hu Y."/>
            <person name="LaBaer J."/>
        </authorList>
    </citation>
    <scope>NUCLEOTIDE SEQUENCE [LARGE SCALE MRNA] (ISOFORM 1)</scope>
</reference>
<reference key="4">
    <citation type="journal article" date="2004" name="Nat. Genet.">
        <title>Complete sequencing and characterization of 21,243 full-length human cDNAs.</title>
        <authorList>
            <person name="Ota T."/>
            <person name="Suzuki Y."/>
            <person name="Nishikawa T."/>
            <person name="Otsuki T."/>
            <person name="Sugiyama T."/>
            <person name="Irie R."/>
            <person name="Wakamatsu A."/>
            <person name="Hayashi K."/>
            <person name="Sato H."/>
            <person name="Nagai K."/>
            <person name="Kimura K."/>
            <person name="Makita H."/>
            <person name="Sekine M."/>
            <person name="Obayashi M."/>
            <person name="Nishi T."/>
            <person name="Shibahara T."/>
            <person name="Tanaka T."/>
            <person name="Ishii S."/>
            <person name="Yamamoto J."/>
            <person name="Saito K."/>
            <person name="Kawai Y."/>
            <person name="Isono Y."/>
            <person name="Nakamura Y."/>
            <person name="Nagahari K."/>
            <person name="Murakami K."/>
            <person name="Yasuda T."/>
            <person name="Iwayanagi T."/>
            <person name="Wagatsuma M."/>
            <person name="Shiratori A."/>
            <person name="Sudo H."/>
            <person name="Hosoiri T."/>
            <person name="Kaku Y."/>
            <person name="Kodaira H."/>
            <person name="Kondo H."/>
            <person name="Sugawara M."/>
            <person name="Takahashi M."/>
            <person name="Kanda K."/>
            <person name="Yokoi T."/>
            <person name="Furuya T."/>
            <person name="Kikkawa E."/>
            <person name="Omura Y."/>
            <person name="Abe K."/>
            <person name="Kamihara K."/>
            <person name="Katsuta N."/>
            <person name="Sato K."/>
            <person name="Tanikawa M."/>
            <person name="Yamazaki M."/>
            <person name="Ninomiya K."/>
            <person name="Ishibashi T."/>
            <person name="Yamashita H."/>
            <person name="Murakawa K."/>
            <person name="Fujimori K."/>
            <person name="Tanai H."/>
            <person name="Kimata M."/>
            <person name="Watanabe M."/>
            <person name="Hiraoka S."/>
            <person name="Chiba Y."/>
            <person name="Ishida S."/>
            <person name="Ono Y."/>
            <person name="Takiguchi S."/>
            <person name="Watanabe S."/>
            <person name="Yosida M."/>
            <person name="Hotuta T."/>
            <person name="Kusano J."/>
            <person name="Kanehori K."/>
            <person name="Takahashi-Fujii A."/>
            <person name="Hara H."/>
            <person name="Tanase T.-O."/>
            <person name="Nomura Y."/>
            <person name="Togiya S."/>
            <person name="Komai F."/>
            <person name="Hara R."/>
            <person name="Takeuchi K."/>
            <person name="Arita M."/>
            <person name="Imose N."/>
            <person name="Musashino K."/>
            <person name="Yuuki H."/>
            <person name="Oshima A."/>
            <person name="Sasaki N."/>
            <person name="Aotsuka S."/>
            <person name="Yoshikawa Y."/>
            <person name="Matsunawa H."/>
            <person name="Ichihara T."/>
            <person name="Shiohata N."/>
            <person name="Sano S."/>
            <person name="Moriya S."/>
            <person name="Momiyama H."/>
            <person name="Satoh N."/>
            <person name="Takami S."/>
            <person name="Terashima Y."/>
            <person name="Suzuki O."/>
            <person name="Nakagawa S."/>
            <person name="Senoh A."/>
            <person name="Mizoguchi H."/>
            <person name="Goto Y."/>
            <person name="Shimizu F."/>
            <person name="Wakebe H."/>
            <person name="Hishigaki H."/>
            <person name="Watanabe T."/>
            <person name="Sugiyama A."/>
            <person name="Takemoto M."/>
            <person name="Kawakami B."/>
            <person name="Yamazaki M."/>
            <person name="Watanabe K."/>
            <person name="Kumagai A."/>
            <person name="Itakura S."/>
            <person name="Fukuzumi Y."/>
            <person name="Fujimori Y."/>
            <person name="Komiyama M."/>
            <person name="Tashiro H."/>
            <person name="Tanigami A."/>
            <person name="Fujiwara T."/>
            <person name="Ono T."/>
            <person name="Yamada K."/>
            <person name="Fujii Y."/>
            <person name="Ozaki K."/>
            <person name="Hirao M."/>
            <person name="Ohmori Y."/>
            <person name="Kawabata A."/>
            <person name="Hikiji T."/>
            <person name="Kobatake N."/>
            <person name="Inagaki H."/>
            <person name="Ikema Y."/>
            <person name="Okamoto S."/>
            <person name="Okitani R."/>
            <person name="Kawakami T."/>
            <person name="Noguchi S."/>
            <person name="Itoh T."/>
            <person name="Shigeta K."/>
            <person name="Senba T."/>
            <person name="Matsumura K."/>
            <person name="Nakajima Y."/>
            <person name="Mizuno T."/>
            <person name="Morinaga M."/>
            <person name="Sasaki M."/>
            <person name="Togashi T."/>
            <person name="Oyama M."/>
            <person name="Hata H."/>
            <person name="Watanabe M."/>
            <person name="Komatsu T."/>
            <person name="Mizushima-Sugano J."/>
            <person name="Satoh T."/>
            <person name="Shirai Y."/>
            <person name="Takahashi Y."/>
            <person name="Nakagawa K."/>
            <person name="Okumura K."/>
            <person name="Nagase T."/>
            <person name="Nomura N."/>
            <person name="Kikuchi H."/>
            <person name="Masuho Y."/>
            <person name="Yamashita R."/>
            <person name="Nakai K."/>
            <person name="Yada T."/>
            <person name="Nakamura Y."/>
            <person name="Ohara O."/>
            <person name="Isogai T."/>
            <person name="Sugano S."/>
        </authorList>
    </citation>
    <scope>NUCLEOTIDE SEQUENCE [LARGE SCALE MRNA] (ISOFORMS 1 AND 2)</scope>
    <source>
        <tissue>Brain</tissue>
    </source>
</reference>
<reference key="5">
    <citation type="journal article" date="1999" name="Nature">
        <title>The DNA sequence of human chromosome 22.</title>
        <authorList>
            <person name="Dunham I."/>
            <person name="Hunt A.R."/>
            <person name="Collins J.E."/>
            <person name="Bruskiewich R."/>
            <person name="Beare D.M."/>
            <person name="Clamp M."/>
            <person name="Smink L.J."/>
            <person name="Ainscough R."/>
            <person name="Almeida J.P."/>
            <person name="Babbage A.K."/>
            <person name="Bagguley C."/>
            <person name="Bailey J."/>
            <person name="Barlow K.F."/>
            <person name="Bates K.N."/>
            <person name="Beasley O.P."/>
            <person name="Bird C.P."/>
            <person name="Blakey S.E."/>
            <person name="Bridgeman A.M."/>
            <person name="Buck D."/>
            <person name="Burgess J."/>
            <person name="Burrill W.D."/>
            <person name="Burton J."/>
            <person name="Carder C."/>
            <person name="Carter N.P."/>
            <person name="Chen Y."/>
            <person name="Clark G."/>
            <person name="Clegg S.M."/>
            <person name="Cobley V.E."/>
            <person name="Cole C.G."/>
            <person name="Collier R.E."/>
            <person name="Connor R."/>
            <person name="Conroy D."/>
            <person name="Corby N.R."/>
            <person name="Coville G.J."/>
            <person name="Cox A.V."/>
            <person name="Davis J."/>
            <person name="Dawson E."/>
            <person name="Dhami P.D."/>
            <person name="Dockree C."/>
            <person name="Dodsworth S.J."/>
            <person name="Durbin R.M."/>
            <person name="Ellington A.G."/>
            <person name="Evans K.L."/>
            <person name="Fey J.M."/>
            <person name="Fleming K."/>
            <person name="French L."/>
            <person name="Garner A.A."/>
            <person name="Gilbert J.G.R."/>
            <person name="Goward M.E."/>
            <person name="Grafham D.V."/>
            <person name="Griffiths M.N.D."/>
            <person name="Hall C."/>
            <person name="Hall R.E."/>
            <person name="Hall-Tamlyn G."/>
            <person name="Heathcott R.W."/>
            <person name="Ho S."/>
            <person name="Holmes S."/>
            <person name="Hunt S.E."/>
            <person name="Jones M.C."/>
            <person name="Kershaw J."/>
            <person name="Kimberley A.M."/>
            <person name="King A."/>
            <person name="Laird G.K."/>
            <person name="Langford C.F."/>
            <person name="Leversha M.A."/>
            <person name="Lloyd C."/>
            <person name="Lloyd D.M."/>
            <person name="Martyn I.D."/>
            <person name="Mashreghi-Mohammadi M."/>
            <person name="Matthews L.H."/>
            <person name="Mccann O.T."/>
            <person name="Mcclay J."/>
            <person name="Mclaren S."/>
            <person name="McMurray A.A."/>
            <person name="Milne S.A."/>
            <person name="Mortimore B.J."/>
            <person name="Odell C.N."/>
            <person name="Pavitt R."/>
            <person name="Pearce A.V."/>
            <person name="Pearson D."/>
            <person name="Phillimore B.J.C.T."/>
            <person name="Phillips S.H."/>
            <person name="Plumb R.W."/>
            <person name="Ramsay H."/>
            <person name="Ramsey Y."/>
            <person name="Rogers L."/>
            <person name="Ross M.T."/>
            <person name="Scott C.E."/>
            <person name="Sehra H.K."/>
            <person name="Skuce C.D."/>
            <person name="Smalley S."/>
            <person name="Smith M.L."/>
            <person name="Soderlund C."/>
            <person name="Spragon L."/>
            <person name="Steward C.A."/>
            <person name="Sulston J.E."/>
            <person name="Swann R.M."/>
            <person name="Vaudin M."/>
            <person name="Wall M."/>
            <person name="Wallis J.M."/>
            <person name="Whiteley M.N."/>
            <person name="Willey D.L."/>
            <person name="Williams L."/>
            <person name="Williams S.A."/>
            <person name="Williamson H."/>
            <person name="Wilmer T.E."/>
            <person name="Wilming L."/>
            <person name="Wright C.L."/>
            <person name="Hubbard T."/>
            <person name="Bentley D.R."/>
            <person name="Beck S."/>
            <person name="Rogers J."/>
            <person name="Shimizu N."/>
            <person name="Minoshima S."/>
            <person name="Kawasaki K."/>
            <person name="Sasaki T."/>
            <person name="Asakawa S."/>
            <person name="Kudoh J."/>
            <person name="Shintani A."/>
            <person name="Shibuya K."/>
            <person name="Yoshizaki Y."/>
            <person name="Aoki N."/>
            <person name="Mitsuyama S."/>
            <person name="Roe B.A."/>
            <person name="Chen F."/>
            <person name="Chu L."/>
            <person name="Crabtree J."/>
            <person name="Deschamps S."/>
            <person name="Do A."/>
            <person name="Do T."/>
            <person name="Dorman A."/>
            <person name="Fang F."/>
            <person name="Fu Y."/>
            <person name="Hu P."/>
            <person name="Hua A."/>
            <person name="Kenton S."/>
            <person name="Lai H."/>
            <person name="Lao H.I."/>
            <person name="Lewis J."/>
            <person name="Lewis S."/>
            <person name="Lin S.-P."/>
            <person name="Loh P."/>
            <person name="Malaj E."/>
            <person name="Nguyen T."/>
            <person name="Pan H."/>
            <person name="Phan S."/>
            <person name="Qi S."/>
            <person name="Qian Y."/>
            <person name="Ray L."/>
            <person name="Ren Q."/>
            <person name="Shaull S."/>
            <person name="Sloan D."/>
            <person name="Song L."/>
            <person name="Wang Q."/>
            <person name="Wang Y."/>
            <person name="Wang Z."/>
            <person name="White J."/>
            <person name="Willingham D."/>
            <person name="Wu H."/>
            <person name="Yao Z."/>
            <person name="Zhan M."/>
            <person name="Zhang G."/>
            <person name="Chissoe S."/>
            <person name="Murray J."/>
            <person name="Miller N."/>
            <person name="Minx P."/>
            <person name="Fulton R."/>
            <person name="Johnson D."/>
            <person name="Bemis G."/>
            <person name="Bentley D."/>
            <person name="Bradshaw H."/>
            <person name="Bourne S."/>
            <person name="Cordes M."/>
            <person name="Du Z."/>
            <person name="Fulton L."/>
            <person name="Goela D."/>
            <person name="Graves T."/>
            <person name="Hawkins J."/>
            <person name="Hinds K."/>
            <person name="Kemp K."/>
            <person name="Latreille P."/>
            <person name="Layman D."/>
            <person name="Ozersky P."/>
            <person name="Rohlfing T."/>
            <person name="Scheet P."/>
            <person name="Walker C."/>
            <person name="Wamsley A."/>
            <person name="Wohldmann P."/>
            <person name="Pepin K."/>
            <person name="Nelson J."/>
            <person name="Korf I."/>
            <person name="Bedell J.A."/>
            <person name="Hillier L.W."/>
            <person name="Mardis E."/>
            <person name="Waterston R."/>
            <person name="Wilson R."/>
            <person name="Emanuel B.S."/>
            <person name="Shaikh T."/>
            <person name="Kurahashi H."/>
            <person name="Saitta S."/>
            <person name="Budarf M.L."/>
            <person name="McDermid H.E."/>
            <person name="Johnson A."/>
            <person name="Wong A.C.C."/>
            <person name="Morrow B.E."/>
            <person name="Edelmann L."/>
            <person name="Kim U.J."/>
            <person name="Shizuya H."/>
            <person name="Simon M.I."/>
            <person name="Dumanski J.P."/>
            <person name="Peyrard M."/>
            <person name="Kedra D."/>
            <person name="Seroussi E."/>
            <person name="Fransson I."/>
            <person name="Tapia I."/>
            <person name="Bruder C.E."/>
            <person name="O'Brien K.P."/>
            <person name="Wilkinson P."/>
            <person name="Bodenteich A."/>
            <person name="Hartman K."/>
            <person name="Hu X."/>
            <person name="Khan A.S."/>
            <person name="Lane L."/>
            <person name="Tilahun Y."/>
            <person name="Wright H."/>
        </authorList>
    </citation>
    <scope>NUCLEOTIDE SEQUENCE [LARGE SCALE GENOMIC DNA]</scope>
</reference>
<reference key="6">
    <citation type="submission" date="2005-07" db="EMBL/GenBank/DDBJ databases">
        <authorList>
            <person name="Mural R.J."/>
            <person name="Istrail S."/>
            <person name="Sutton G.G."/>
            <person name="Florea L."/>
            <person name="Halpern A.L."/>
            <person name="Mobarry C.M."/>
            <person name="Lippert R."/>
            <person name="Walenz B."/>
            <person name="Shatkay H."/>
            <person name="Dew I."/>
            <person name="Miller J.R."/>
            <person name="Flanigan M.J."/>
            <person name="Edwards N.J."/>
            <person name="Bolanos R."/>
            <person name="Fasulo D."/>
            <person name="Halldorsson B.V."/>
            <person name="Hannenhalli S."/>
            <person name="Turner R."/>
            <person name="Yooseph S."/>
            <person name="Lu F."/>
            <person name="Nusskern D.R."/>
            <person name="Shue B.C."/>
            <person name="Zheng X.H."/>
            <person name="Zhong F."/>
            <person name="Delcher A.L."/>
            <person name="Huson D.H."/>
            <person name="Kravitz S.A."/>
            <person name="Mouchard L."/>
            <person name="Reinert K."/>
            <person name="Remington K.A."/>
            <person name="Clark A.G."/>
            <person name="Waterman M.S."/>
            <person name="Eichler E.E."/>
            <person name="Adams M.D."/>
            <person name="Hunkapiller M.W."/>
            <person name="Myers E.W."/>
            <person name="Venter J.C."/>
        </authorList>
    </citation>
    <scope>NUCLEOTIDE SEQUENCE [LARGE SCALE GENOMIC DNA]</scope>
</reference>
<reference key="7">
    <citation type="journal article" date="2004" name="Genome Res.">
        <title>The status, quality, and expansion of the NIH full-length cDNA project: the Mammalian Gene Collection (MGC).</title>
        <authorList>
            <consortium name="The MGC Project Team"/>
        </authorList>
    </citation>
    <scope>NUCLEOTIDE SEQUENCE [LARGE SCALE MRNA] (ISOFORM 1)</scope>
    <source>
        <tissue>Colon</tissue>
        <tissue>Placenta</tissue>
    </source>
</reference>
<reference key="8">
    <citation type="journal article" date="2008" name="Curr. Biol.">
        <title>Evidence for insertional RNA editing in humans.</title>
        <authorList>
            <person name="Zougman A."/>
            <person name="Ziolkowski P."/>
            <person name="Mann M."/>
            <person name="Wisniewski J.R."/>
        </authorList>
    </citation>
    <scope>PARTIAL PROTEIN SEQUENCE (RNA EDITED VERSION)</scope>
    <scope>IDENTIFICATION BY MASS SPECTROMETRY</scope>
    <scope>RNA EDITING</scope>
    <scope>SUBCELLULAR LOCATION</scope>
    <scope>INDUCTION</scope>
</reference>
<reference key="9">
    <citation type="journal article" date="1998" name="J. Biol. Chem.">
        <title>The microheterogeneity of the mammalian H1(0) histone. Evidence for an age-dependent deamidation.</title>
        <authorList>
            <person name="Lindner H."/>
            <person name="Sarg B."/>
            <person name="Hoertnagl B."/>
            <person name="Helliger W."/>
        </authorList>
    </citation>
    <scope>ACETYLATION AT THR-2</scope>
    <scope>CLEAVAGE OF INITIATOR METHIONINE</scope>
    <scope>DEAMIDATION AT ASN-4</scope>
</reference>
<reference key="10">
    <citation type="journal article" date="2009" name="Anal. Chem.">
        <title>Lys-N and trypsin cover complementary parts of the phosphoproteome in a refined SCX-based approach.</title>
        <authorList>
            <person name="Gauci S."/>
            <person name="Helbig A.O."/>
            <person name="Slijper M."/>
            <person name="Krijgsveld J."/>
            <person name="Heck A.J."/>
            <person name="Mohammed S."/>
        </authorList>
    </citation>
    <scope>ACETYLATION [LARGE SCALE ANALYSIS] AT MET-1 AND THR-2</scope>
    <scope>CLEAVAGE OF INITIATOR METHIONINE [LARGE SCALE ANALYSIS]</scope>
    <scope>IDENTIFICATION BY MASS SPECTROMETRY [LARGE SCALE ANALYSIS]</scope>
</reference>
<reference key="11">
    <citation type="journal article" date="2011" name="BMC Syst. Biol.">
        <title>Initial characterization of the human central proteome.</title>
        <authorList>
            <person name="Burkard T.R."/>
            <person name="Planyavsky M."/>
            <person name="Kaupe I."/>
            <person name="Breitwieser F.P."/>
            <person name="Buerckstuemmer T."/>
            <person name="Bennett K.L."/>
            <person name="Superti-Furga G."/>
            <person name="Colinge J."/>
        </authorList>
    </citation>
    <scope>IDENTIFICATION BY MASS SPECTROMETRY [LARGE SCALE ANALYSIS]</scope>
</reference>
<reference key="12">
    <citation type="journal article" date="2012" name="Proc. Natl. Acad. Sci. U.S.A.">
        <title>N-terminal acetylome analyses and functional insights of the N-terminal acetyltransferase NatB.</title>
        <authorList>
            <person name="Van Damme P."/>
            <person name="Lasa M."/>
            <person name="Polevoda B."/>
            <person name="Gazquez C."/>
            <person name="Elosegui-Artola A."/>
            <person name="Kim D.S."/>
            <person name="De Juan-Pardo E."/>
            <person name="Demeyer K."/>
            <person name="Hole K."/>
            <person name="Larrea E."/>
            <person name="Timmerman E."/>
            <person name="Prieto J."/>
            <person name="Arnesen T."/>
            <person name="Sherman F."/>
            <person name="Gevaert K."/>
            <person name="Aldabe R."/>
        </authorList>
    </citation>
    <scope>IDENTIFICATION BY MASS SPECTROMETRY [LARGE SCALE ANALYSIS]</scope>
</reference>
<reference key="13">
    <citation type="journal article" date="2016" name="Nat. Chem. Biol.">
        <title>Serine is a new target residue for endogenous ADP-ribosylation on histones.</title>
        <authorList>
            <person name="Leidecker O."/>
            <person name="Bonfiglio J.J."/>
            <person name="Colby T."/>
            <person name="Zhang Q."/>
            <person name="Atanassov I."/>
            <person name="Zaja R."/>
            <person name="Palazzo L."/>
            <person name="Stockum A."/>
            <person name="Ahel I."/>
            <person name="Matic I."/>
        </authorList>
    </citation>
    <scope>ADP-RIBOSYLATION AT SER-104</scope>
</reference>